<organism>
    <name type="scientific">Salmonella newport (strain SL254)</name>
    <dbReference type="NCBI Taxonomy" id="423368"/>
    <lineage>
        <taxon>Bacteria</taxon>
        <taxon>Pseudomonadati</taxon>
        <taxon>Pseudomonadota</taxon>
        <taxon>Gammaproteobacteria</taxon>
        <taxon>Enterobacterales</taxon>
        <taxon>Enterobacteriaceae</taxon>
        <taxon>Salmonella</taxon>
    </lineage>
</organism>
<evidence type="ECO:0000255" key="1">
    <source>
        <dbReference type="HAMAP-Rule" id="MF_01181"/>
    </source>
</evidence>
<proteinExistence type="inferred from homology"/>
<reference key="1">
    <citation type="journal article" date="2011" name="J. Bacteriol.">
        <title>Comparative genomics of 28 Salmonella enterica isolates: evidence for CRISPR-mediated adaptive sublineage evolution.</title>
        <authorList>
            <person name="Fricke W.F."/>
            <person name="Mammel M.K."/>
            <person name="McDermott P.F."/>
            <person name="Tartera C."/>
            <person name="White D.G."/>
            <person name="Leclerc J.E."/>
            <person name="Ravel J."/>
            <person name="Cebula T.A."/>
        </authorList>
    </citation>
    <scope>NUCLEOTIDE SEQUENCE [LARGE SCALE GENOMIC DNA]</scope>
    <source>
        <strain>SL254</strain>
    </source>
</reference>
<sequence length="162" mass="18653">MLNQLENLTERVGGSNKLVDRWLDVRKHLLVAYYNLVGIKPGKESYMRLNEKALDDFCQSLVDYLSAGHFSIYERILHKLEGNGQLLHAAKIWPLLEDNTQRIMDYYDTSLETAIDHDNCLEFQQALSDIGEALEARFVLEDKLIMLVFDAMHDGARVKRPA</sequence>
<gene>
    <name evidence="1" type="primary">rsd</name>
    <name type="ordered locus">SNSL254_A4498</name>
</gene>
<accession>B4T0Z7</accession>
<feature type="chain" id="PRO_1000138202" description="Regulator of sigma D">
    <location>
        <begin position="1"/>
        <end position="162"/>
    </location>
</feature>
<dbReference type="EMBL" id="CP001113">
    <property type="protein sequence ID" value="ACF62583.1"/>
    <property type="molecule type" value="Genomic_DNA"/>
</dbReference>
<dbReference type="RefSeq" id="WP_000934315.1">
    <property type="nucleotide sequence ID" value="NZ_CCMR01000001.1"/>
</dbReference>
<dbReference type="SMR" id="B4T0Z7"/>
<dbReference type="KEGG" id="see:SNSL254_A4498"/>
<dbReference type="HOGENOM" id="CLU_142729_0_0_6"/>
<dbReference type="Proteomes" id="UP000008824">
    <property type="component" value="Chromosome"/>
</dbReference>
<dbReference type="GO" id="GO:0005737">
    <property type="term" value="C:cytoplasm"/>
    <property type="evidence" value="ECO:0007669"/>
    <property type="project" value="UniProtKB-SubCell"/>
</dbReference>
<dbReference type="GO" id="GO:0006355">
    <property type="term" value="P:regulation of DNA-templated transcription"/>
    <property type="evidence" value="ECO:0007669"/>
    <property type="project" value="InterPro"/>
</dbReference>
<dbReference type="FunFam" id="1.20.120.1370:FF:000001">
    <property type="entry name" value="Regulator of sigma D"/>
    <property type="match status" value="1"/>
</dbReference>
<dbReference type="Gene3D" id="1.20.120.1370">
    <property type="entry name" value="Regulator of RNA polymerase sigma(70) subunit, domain 4"/>
    <property type="match status" value="1"/>
</dbReference>
<dbReference type="HAMAP" id="MF_01181">
    <property type="entry name" value="Rsd"/>
    <property type="match status" value="1"/>
</dbReference>
<dbReference type="InterPro" id="IPR038309">
    <property type="entry name" value="Rsd/AlgQ_sf"/>
</dbReference>
<dbReference type="InterPro" id="IPR023785">
    <property type="entry name" value="Sigma70_reg_Rsd"/>
</dbReference>
<dbReference type="InterPro" id="IPR007448">
    <property type="entry name" value="Sigma70_reg_Rsd_AlgQ"/>
</dbReference>
<dbReference type="NCBIfam" id="NF008723">
    <property type="entry name" value="PRK11718.1"/>
    <property type="match status" value="1"/>
</dbReference>
<dbReference type="Pfam" id="PF04353">
    <property type="entry name" value="Rsd_AlgQ"/>
    <property type="match status" value="1"/>
</dbReference>
<dbReference type="PIRSF" id="PIRSF016548">
    <property type="entry name" value="Rsd_AlgQ"/>
    <property type="match status" value="1"/>
</dbReference>
<protein>
    <recommendedName>
        <fullName evidence="1">Regulator of sigma D</fullName>
    </recommendedName>
</protein>
<name>RSD_SALNS</name>
<comment type="function">
    <text evidence="1">Binds RpoD and negatively regulates RpoD-mediated transcription activation by preventing the interaction between the primary sigma factor RpoD with the catalytic core of the RNA polymerase and with promoter DNA. May be involved in replacement of the RNA polymerase sigma subunit from RpoD to RpoS during the transition from exponential growth to the stationary phase.</text>
</comment>
<comment type="subunit">
    <text evidence="1">Interacts with RpoD.</text>
</comment>
<comment type="subcellular location">
    <subcellularLocation>
        <location evidence="1">Cytoplasm</location>
    </subcellularLocation>
</comment>
<comment type="similarity">
    <text evidence="1">Belongs to the Rsd/AlgQ family.</text>
</comment>
<keyword id="KW-0963">Cytoplasm</keyword>
<keyword id="KW-0804">Transcription</keyword>
<keyword id="KW-0805">Transcription regulation</keyword>